<proteinExistence type="inferred from homology"/>
<dbReference type="EC" id="4.1.1.23" evidence="1"/>
<dbReference type="EMBL" id="BA000033">
    <property type="protein sequence ID" value="BAB94952.1"/>
    <property type="molecule type" value="Genomic_DNA"/>
</dbReference>
<dbReference type="RefSeq" id="WP_000654067.1">
    <property type="nucleotide sequence ID" value="NC_003923.1"/>
</dbReference>
<dbReference type="SMR" id="P65596"/>
<dbReference type="KEGG" id="sam:MW1087"/>
<dbReference type="HOGENOM" id="CLU_067069_1_1_9"/>
<dbReference type="UniPathway" id="UPA00070">
    <property type="reaction ID" value="UER00120"/>
</dbReference>
<dbReference type="GO" id="GO:0005829">
    <property type="term" value="C:cytosol"/>
    <property type="evidence" value="ECO:0007669"/>
    <property type="project" value="TreeGrafter"/>
</dbReference>
<dbReference type="GO" id="GO:0004590">
    <property type="term" value="F:orotidine-5'-phosphate decarboxylase activity"/>
    <property type="evidence" value="ECO:0007669"/>
    <property type="project" value="UniProtKB-UniRule"/>
</dbReference>
<dbReference type="GO" id="GO:0006207">
    <property type="term" value="P:'de novo' pyrimidine nucleobase biosynthetic process"/>
    <property type="evidence" value="ECO:0007669"/>
    <property type="project" value="InterPro"/>
</dbReference>
<dbReference type="GO" id="GO:0044205">
    <property type="term" value="P:'de novo' UMP biosynthetic process"/>
    <property type="evidence" value="ECO:0007669"/>
    <property type="project" value="UniProtKB-UniRule"/>
</dbReference>
<dbReference type="CDD" id="cd04725">
    <property type="entry name" value="OMP_decarboxylase_like"/>
    <property type="match status" value="1"/>
</dbReference>
<dbReference type="FunFam" id="3.20.20.70:FF:000015">
    <property type="entry name" value="Orotidine 5'-phosphate decarboxylase"/>
    <property type="match status" value="1"/>
</dbReference>
<dbReference type="Gene3D" id="3.20.20.70">
    <property type="entry name" value="Aldolase class I"/>
    <property type="match status" value="1"/>
</dbReference>
<dbReference type="HAMAP" id="MF_01200_B">
    <property type="entry name" value="OMPdecase_type1_B"/>
    <property type="match status" value="1"/>
</dbReference>
<dbReference type="InterPro" id="IPR013785">
    <property type="entry name" value="Aldolase_TIM"/>
</dbReference>
<dbReference type="InterPro" id="IPR014732">
    <property type="entry name" value="OMPdecase"/>
</dbReference>
<dbReference type="InterPro" id="IPR018089">
    <property type="entry name" value="OMPdecase_AS"/>
</dbReference>
<dbReference type="InterPro" id="IPR047596">
    <property type="entry name" value="OMPdecase_bac"/>
</dbReference>
<dbReference type="InterPro" id="IPR001754">
    <property type="entry name" value="OMPdeCOase_dom"/>
</dbReference>
<dbReference type="InterPro" id="IPR011060">
    <property type="entry name" value="RibuloseP-bd_barrel"/>
</dbReference>
<dbReference type="NCBIfam" id="NF001273">
    <property type="entry name" value="PRK00230.1"/>
    <property type="match status" value="1"/>
</dbReference>
<dbReference type="NCBIfam" id="TIGR01740">
    <property type="entry name" value="pyrF"/>
    <property type="match status" value="1"/>
</dbReference>
<dbReference type="PANTHER" id="PTHR32119">
    <property type="entry name" value="OROTIDINE 5'-PHOSPHATE DECARBOXYLASE"/>
    <property type="match status" value="1"/>
</dbReference>
<dbReference type="PANTHER" id="PTHR32119:SF2">
    <property type="entry name" value="OROTIDINE 5'-PHOSPHATE DECARBOXYLASE"/>
    <property type="match status" value="1"/>
</dbReference>
<dbReference type="Pfam" id="PF00215">
    <property type="entry name" value="OMPdecase"/>
    <property type="match status" value="1"/>
</dbReference>
<dbReference type="SMART" id="SM00934">
    <property type="entry name" value="OMPdecase"/>
    <property type="match status" value="1"/>
</dbReference>
<dbReference type="SUPFAM" id="SSF51366">
    <property type="entry name" value="Ribulose-phoshate binding barrel"/>
    <property type="match status" value="1"/>
</dbReference>
<dbReference type="PROSITE" id="PS00156">
    <property type="entry name" value="OMPDECASE"/>
    <property type="match status" value="1"/>
</dbReference>
<comment type="function">
    <text evidence="1">Catalyzes the decarboxylation of orotidine 5'-monophosphate (OMP) to uridine 5'-monophosphate (UMP).</text>
</comment>
<comment type="catalytic activity">
    <reaction evidence="1">
        <text>orotidine 5'-phosphate + H(+) = UMP + CO2</text>
        <dbReference type="Rhea" id="RHEA:11596"/>
        <dbReference type="ChEBI" id="CHEBI:15378"/>
        <dbReference type="ChEBI" id="CHEBI:16526"/>
        <dbReference type="ChEBI" id="CHEBI:57538"/>
        <dbReference type="ChEBI" id="CHEBI:57865"/>
        <dbReference type="EC" id="4.1.1.23"/>
    </reaction>
</comment>
<comment type="pathway">
    <text evidence="1">Pyrimidine metabolism; UMP biosynthesis via de novo pathway; UMP from orotate: step 2/2.</text>
</comment>
<comment type="subunit">
    <text evidence="1">Homodimer.</text>
</comment>
<comment type="similarity">
    <text evidence="1">Belongs to the OMP decarboxylase family. Type 1 subfamily.</text>
</comment>
<gene>
    <name evidence="1" type="primary">pyrF</name>
    <name type="ordered locus">MW1087</name>
</gene>
<sequence length="230" mass="25619">MKDLPIIALDFESKEKVNQFLDLFDESLFVKVGMELFYQEGPQLINEIKERGHDVFLDLKLHDIPNTVGKAMEGLAKLNVDLVNVHAAGGVKMMSEAIKGLRKHNQHTKIIAVTQLTSTTEDMLRHEQNIQTSIEEAVLNYAKLANAAGLDGVVCSPLESRMLTEKLGTSFLKVTPGIRPKGASQDDQHRITTPEEARQLGSTHIVVGRPITQSDNPVESYHKIKESWLV</sequence>
<name>PYRF_STAAW</name>
<evidence type="ECO:0000255" key="1">
    <source>
        <dbReference type="HAMAP-Rule" id="MF_01200"/>
    </source>
</evidence>
<organism>
    <name type="scientific">Staphylococcus aureus (strain MW2)</name>
    <dbReference type="NCBI Taxonomy" id="196620"/>
    <lineage>
        <taxon>Bacteria</taxon>
        <taxon>Bacillati</taxon>
        <taxon>Bacillota</taxon>
        <taxon>Bacilli</taxon>
        <taxon>Bacillales</taxon>
        <taxon>Staphylococcaceae</taxon>
        <taxon>Staphylococcus</taxon>
    </lineage>
</organism>
<protein>
    <recommendedName>
        <fullName evidence="1">Orotidine 5'-phosphate decarboxylase</fullName>
        <ecNumber evidence="1">4.1.1.23</ecNumber>
    </recommendedName>
    <alternativeName>
        <fullName evidence="1">OMP decarboxylase</fullName>
        <shortName evidence="1">OMPDCase</shortName>
        <shortName evidence="1">OMPdecase</shortName>
    </alternativeName>
</protein>
<keyword id="KW-0210">Decarboxylase</keyword>
<keyword id="KW-0456">Lyase</keyword>
<keyword id="KW-0665">Pyrimidine biosynthesis</keyword>
<accession>P65596</accession>
<accession>Q99UR4</accession>
<feature type="chain" id="PRO_0000134579" description="Orotidine 5'-phosphate decarboxylase">
    <location>
        <begin position="1"/>
        <end position="230"/>
    </location>
</feature>
<feature type="active site" description="Proton donor" evidence="1">
    <location>
        <position position="60"/>
    </location>
</feature>
<feature type="binding site" evidence="1">
    <location>
        <position position="10"/>
    </location>
    <ligand>
        <name>substrate</name>
    </ligand>
</feature>
<feature type="binding site" evidence="1">
    <location>
        <position position="31"/>
    </location>
    <ligand>
        <name>substrate</name>
    </ligand>
</feature>
<feature type="binding site" evidence="1">
    <location>
        <begin position="58"/>
        <end position="67"/>
    </location>
    <ligand>
        <name>substrate</name>
    </ligand>
</feature>
<feature type="binding site" evidence="1">
    <location>
        <position position="117"/>
    </location>
    <ligand>
        <name>substrate</name>
    </ligand>
</feature>
<feature type="binding site" evidence="1">
    <location>
        <position position="179"/>
    </location>
    <ligand>
        <name>substrate</name>
    </ligand>
</feature>
<feature type="binding site" evidence="1">
    <location>
        <position position="188"/>
    </location>
    <ligand>
        <name>substrate</name>
    </ligand>
</feature>
<feature type="binding site" evidence="1">
    <location>
        <position position="208"/>
    </location>
    <ligand>
        <name>substrate</name>
    </ligand>
</feature>
<feature type="binding site" evidence="1">
    <location>
        <position position="209"/>
    </location>
    <ligand>
        <name>substrate</name>
    </ligand>
</feature>
<reference key="1">
    <citation type="journal article" date="2002" name="Lancet">
        <title>Genome and virulence determinants of high virulence community-acquired MRSA.</title>
        <authorList>
            <person name="Baba T."/>
            <person name="Takeuchi F."/>
            <person name="Kuroda M."/>
            <person name="Yuzawa H."/>
            <person name="Aoki K."/>
            <person name="Oguchi A."/>
            <person name="Nagai Y."/>
            <person name="Iwama N."/>
            <person name="Asano K."/>
            <person name="Naimi T."/>
            <person name="Kuroda H."/>
            <person name="Cui L."/>
            <person name="Yamamoto K."/>
            <person name="Hiramatsu K."/>
        </authorList>
    </citation>
    <scope>NUCLEOTIDE SEQUENCE [LARGE SCALE GENOMIC DNA]</scope>
    <source>
        <strain>MW2</strain>
    </source>
</reference>